<protein>
    <recommendedName>
        <fullName evidence="1">Lipid-A-disaccharide synthase</fullName>
        <ecNumber evidence="1">2.4.1.182</ecNumber>
    </recommendedName>
</protein>
<reference key="1">
    <citation type="journal article" date="2005" name="Proc. Natl. Acad. Sci. U.S.A.">
        <title>Comparison of the complete genome sequences of Pseudomonas syringae pv. syringae B728a and pv. tomato DC3000.</title>
        <authorList>
            <person name="Feil H."/>
            <person name="Feil W.S."/>
            <person name="Chain P."/>
            <person name="Larimer F."/>
            <person name="Dibartolo G."/>
            <person name="Copeland A."/>
            <person name="Lykidis A."/>
            <person name="Trong S."/>
            <person name="Nolan M."/>
            <person name="Goltsman E."/>
            <person name="Thiel J."/>
            <person name="Malfatti S."/>
            <person name="Loper J.E."/>
            <person name="Lapidus A."/>
            <person name="Detter J.C."/>
            <person name="Land M."/>
            <person name="Richardson P.M."/>
            <person name="Kyrpides N.C."/>
            <person name="Ivanova N."/>
            <person name="Lindow S.E."/>
        </authorList>
    </citation>
    <scope>NUCLEOTIDE SEQUENCE [LARGE SCALE GENOMIC DNA]</scope>
    <source>
        <strain>B728a</strain>
    </source>
</reference>
<dbReference type="EC" id="2.4.1.182" evidence="1"/>
<dbReference type="EMBL" id="CP000075">
    <property type="protein sequence ID" value="AAY36407.1"/>
    <property type="molecule type" value="Genomic_DNA"/>
</dbReference>
<dbReference type="RefSeq" id="WP_011266979.1">
    <property type="nucleotide sequence ID" value="NC_007005.1"/>
</dbReference>
<dbReference type="RefSeq" id="YP_234445.1">
    <property type="nucleotide sequence ID" value="NC_007005.1"/>
</dbReference>
<dbReference type="SMR" id="Q4ZWR5"/>
<dbReference type="STRING" id="205918.Psyr_1356"/>
<dbReference type="CAZy" id="GT19">
    <property type="family name" value="Glycosyltransferase Family 19"/>
</dbReference>
<dbReference type="KEGG" id="psb:Psyr_1356"/>
<dbReference type="PATRIC" id="fig|205918.7.peg.1389"/>
<dbReference type="eggNOG" id="COG0763">
    <property type="taxonomic scope" value="Bacteria"/>
</dbReference>
<dbReference type="HOGENOM" id="CLU_036577_3_0_6"/>
<dbReference type="OrthoDB" id="9801642at2"/>
<dbReference type="UniPathway" id="UPA00973"/>
<dbReference type="Proteomes" id="UP000000426">
    <property type="component" value="Chromosome"/>
</dbReference>
<dbReference type="GO" id="GO:0016020">
    <property type="term" value="C:membrane"/>
    <property type="evidence" value="ECO:0007669"/>
    <property type="project" value="GOC"/>
</dbReference>
<dbReference type="GO" id="GO:0008915">
    <property type="term" value="F:lipid-A-disaccharide synthase activity"/>
    <property type="evidence" value="ECO:0007669"/>
    <property type="project" value="UniProtKB-UniRule"/>
</dbReference>
<dbReference type="GO" id="GO:0005543">
    <property type="term" value="F:phospholipid binding"/>
    <property type="evidence" value="ECO:0007669"/>
    <property type="project" value="TreeGrafter"/>
</dbReference>
<dbReference type="GO" id="GO:0009245">
    <property type="term" value="P:lipid A biosynthetic process"/>
    <property type="evidence" value="ECO:0007669"/>
    <property type="project" value="UniProtKB-UniRule"/>
</dbReference>
<dbReference type="Gene3D" id="3.40.50.2000">
    <property type="entry name" value="Glycogen Phosphorylase B"/>
    <property type="match status" value="1"/>
</dbReference>
<dbReference type="HAMAP" id="MF_00392">
    <property type="entry name" value="LpxB"/>
    <property type="match status" value="1"/>
</dbReference>
<dbReference type="InterPro" id="IPR003835">
    <property type="entry name" value="Glyco_trans_19"/>
</dbReference>
<dbReference type="NCBIfam" id="TIGR00215">
    <property type="entry name" value="lpxB"/>
    <property type="match status" value="1"/>
</dbReference>
<dbReference type="PANTHER" id="PTHR30372">
    <property type="entry name" value="LIPID-A-DISACCHARIDE SYNTHASE"/>
    <property type="match status" value="1"/>
</dbReference>
<dbReference type="PANTHER" id="PTHR30372:SF4">
    <property type="entry name" value="LIPID-A-DISACCHARIDE SYNTHASE, MITOCHONDRIAL-RELATED"/>
    <property type="match status" value="1"/>
</dbReference>
<dbReference type="Pfam" id="PF02684">
    <property type="entry name" value="LpxB"/>
    <property type="match status" value="1"/>
</dbReference>
<dbReference type="SUPFAM" id="SSF53756">
    <property type="entry name" value="UDP-Glycosyltransferase/glycogen phosphorylase"/>
    <property type="match status" value="1"/>
</dbReference>
<feature type="chain" id="PRO_0000255210" description="Lipid-A-disaccharide synthase">
    <location>
        <begin position="1"/>
        <end position="380"/>
    </location>
</feature>
<keyword id="KW-0328">Glycosyltransferase</keyword>
<keyword id="KW-0441">Lipid A biosynthesis</keyword>
<keyword id="KW-0444">Lipid biosynthesis</keyword>
<keyword id="KW-0443">Lipid metabolism</keyword>
<keyword id="KW-0808">Transferase</keyword>
<accession>Q4ZWR5</accession>
<sequence>MPSPLCIALVAGEASGDILGSGLMRALKVRHPDIRFIGVGGPLMEAEGMQSSFPMERLSVMGLVEVLGRLRELLARRKLLVQTLINEKPDVFIGIDAPDFTLNIELQLRRAGIKTVHYVSPSVWAWRQKRVLKIREGCDLMLTLLPFEARFYEEQGVPVRFVGHPLADTIPLESDRAGARAGLGLAQETPVVALMPGSRGGEVGRLGGLFFDTAERLLARCPELRFVLPCASPQRRAQVEQLLQGRDLPVTLLDGQSHVALAACDAVLIASGTATLEALLYKRPMVVAYRLAPLTFWILKRMVKSPYVSLPNLLAQRLLVPELLQDDATPEALARTLLPLIDDGREQTAGFDAIHRILRRDASNQAADAVLSLLGRSPSL</sequence>
<gene>
    <name evidence="1" type="primary">lpxB</name>
    <name type="ordered locus">Psyr_1356</name>
</gene>
<comment type="function">
    <text evidence="1">Condensation of UDP-2,3-diacylglucosamine and 2,3-diacylglucosamine-1-phosphate to form lipid A disaccharide, a precursor of lipid A, a phosphorylated glycolipid that anchors the lipopolysaccharide to the outer membrane of the cell.</text>
</comment>
<comment type="catalytic activity">
    <reaction evidence="1">
        <text>a lipid X + a UDP-2-N,3-O-bis[(3R)-3-hydroxyacyl]-alpha-D-glucosamine = a lipid A disaccharide + UDP + H(+)</text>
        <dbReference type="Rhea" id="RHEA:67828"/>
        <dbReference type="ChEBI" id="CHEBI:15378"/>
        <dbReference type="ChEBI" id="CHEBI:58223"/>
        <dbReference type="ChEBI" id="CHEBI:137748"/>
        <dbReference type="ChEBI" id="CHEBI:176338"/>
        <dbReference type="ChEBI" id="CHEBI:176343"/>
        <dbReference type="EC" id="2.4.1.182"/>
    </reaction>
</comment>
<comment type="pathway">
    <text evidence="1">Bacterial outer membrane biogenesis; LPS lipid A biosynthesis.</text>
</comment>
<comment type="similarity">
    <text evidence="1">Belongs to the LpxB family.</text>
</comment>
<organism>
    <name type="scientific">Pseudomonas syringae pv. syringae (strain B728a)</name>
    <dbReference type="NCBI Taxonomy" id="205918"/>
    <lineage>
        <taxon>Bacteria</taxon>
        <taxon>Pseudomonadati</taxon>
        <taxon>Pseudomonadota</taxon>
        <taxon>Gammaproteobacteria</taxon>
        <taxon>Pseudomonadales</taxon>
        <taxon>Pseudomonadaceae</taxon>
        <taxon>Pseudomonas</taxon>
        <taxon>Pseudomonas syringae</taxon>
    </lineage>
</organism>
<name>LPXB_PSEU2</name>
<proteinExistence type="inferred from homology"/>
<evidence type="ECO:0000255" key="1">
    <source>
        <dbReference type="HAMAP-Rule" id="MF_00392"/>
    </source>
</evidence>